<name>YOMX_BACSU</name>
<reference key="1">
    <citation type="journal article" date="1997" name="Nature">
        <title>The complete genome sequence of the Gram-positive bacterium Bacillus subtilis.</title>
        <authorList>
            <person name="Kunst F."/>
            <person name="Ogasawara N."/>
            <person name="Moszer I."/>
            <person name="Albertini A.M."/>
            <person name="Alloni G."/>
            <person name="Azevedo V."/>
            <person name="Bertero M.G."/>
            <person name="Bessieres P."/>
            <person name="Bolotin A."/>
            <person name="Borchert S."/>
            <person name="Borriss R."/>
            <person name="Boursier L."/>
            <person name="Brans A."/>
            <person name="Braun M."/>
            <person name="Brignell S.C."/>
            <person name="Bron S."/>
            <person name="Brouillet S."/>
            <person name="Bruschi C.V."/>
            <person name="Caldwell B."/>
            <person name="Capuano V."/>
            <person name="Carter N.M."/>
            <person name="Choi S.-K."/>
            <person name="Codani J.-J."/>
            <person name="Connerton I.F."/>
            <person name="Cummings N.J."/>
            <person name="Daniel R.A."/>
            <person name="Denizot F."/>
            <person name="Devine K.M."/>
            <person name="Duesterhoeft A."/>
            <person name="Ehrlich S.D."/>
            <person name="Emmerson P.T."/>
            <person name="Entian K.-D."/>
            <person name="Errington J."/>
            <person name="Fabret C."/>
            <person name="Ferrari E."/>
            <person name="Foulger D."/>
            <person name="Fritz C."/>
            <person name="Fujita M."/>
            <person name="Fujita Y."/>
            <person name="Fuma S."/>
            <person name="Galizzi A."/>
            <person name="Galleron N."/>
            <person name="Ghim S.-Y."/>
            <person name="Glaser P."/>
            <person name="Goffeau A."/>
            <person name="Golightly E.J."/>
            <person name="Grandi G."/>
            <person name="Guiseppi G."/>
            <person name="Guy B.J."/>
            <person name="Haga K."/>
            <person name="Haiech J."/>
            <person name="Harwood C.R."/>
            <person name="Henaut A."/>
            <person name="Hilbert H."/>
            <person name="Holsappel S."/>
            <person name="Hosono S."/>
            <person name="Hullo M.-F."/>
            <person name="Itaya M."/>
            <person name="Jones L.-M."/>
            <person name="Joris B."/>
            <person name="Karamata D."/>
            <person name="Kasahara Y."/>
            <person name="Klaerr-Blanchard M."/>
            <person name="Klein C."/>
            <person name="Kobayashi Y."/>
            <person name="Koetter P."/>
            <person name="Koningstein G."/>
            <person name="Krogh S."/>
            <person name="Kumano M."/>
            <person name="Kurita K."/>
            <person name="Lapidus A."/>
            <person name="Lardinois S."/>
            <person name="Lauber J."/>
            <person name="Lazarevic V."/>
            <person name="Lee S.-M."/>
            <person name="Levine A."/>
            <person name="Liu H."/>
            <person name="Masuda S."/>
            <person name="Mauel C."/>
            <person name="Medigue C."/>
            <person name="Medina N."/>
            <person name="Mellado R.P."/>
            <person name="Mizuno M."/>
            <person name="Moestl D."/>
            <person name="Nakai S."/>
            <person name="Noback M."/>
            <person name="Noone D."/>
            <person name="O'Reilly M."/>
            <person name="Ogawa K."/>
            <person name="Ogiwara A."/>
            <person name="Oudega B."/>
            <person name="Park S.-H."/>
            <person name="Parro V."/>
            <person name="Pohl T.M."/>
            <person name="Portetelle D."/>
            <person name="Porwollik S."/>
            <person name="Prescott A.M."/>
            <person name="Presecan E."/>
            <person name="Pujic P."/>
            <person name="Purnelle B."/>
            <person name="Rapoport G."/>
            <person name="Rey M."/>
            <person name="Reynolds S."/>
            <person name="Rieger M."/>
            <person name="Rivolta C."/>
            <person name="Rocha E."/>
            <person name="Roche B."/>
            <person name="Rose M."/>
            <person name="Sadaie Y."/>
            <person name="Sato T."/>
            <person name="Scanlan E."/>
            <person name="Schleich S."/>
            <person name="Schroeter R."/>
            <person name="Scoffone F."/>
            <person name="Sekiguchi J."/>
            <person name="Sekowska A."/>
            <person name="Seror S.J."/>
            <person name="Serror P."/>
            <person name="Shin B.-S."/>
            <person name="Soldo B."/>
            <person name="Sorokin A."/>
            <person name="Tacconi E."/>
            <person name="Takagi T."/>
            <person name="Takahashi H."/>
            <person name="Takemaru K."/>
            <person name="Takeuchi M."/>
            <person name="Tamakoshi A."/>
            <person name="Tanaka T."/>
            <person name="Terpstra P."/>
            <person name="Tognoni A."/>
            <person name="Tosato V."/>
            <person name="Uchiyama S."/>
            <person name="Vandenbol M."/>
            <person name="Vannier F."/>
            <person name="Vassarotti A."/>
            <person name="Viari A."/>
            <person name="Wambutt R."/>
            <person name="Wedler E."/>
            <person name="Wedler H."/>
            <person name="Weitzenegger T."/>
            <person name="Winters P."/>
            <person name="Wipat A."/>
            <person name="Yamamoto H."/>
            <person name="Yamane K."/>
            <person name="Yasumoto K."/>
            <person name="Yata K."/>
            <person name="Yoshida K."/>
            <person name="Yoshikawa H.-F."/>
            <person name="Zumstein E."/>
            <person name="Yoshikawa H."/>
            <person name="Danchin A."/>
        </authorList>
    </citation>
    <scope>NUCLEOTIDE SEQUENCE [LARGE SCALE GENOMIC DNA]</scope>
    <source>
        <strain>168</strain>
    </source>
</reference>
<sequence>MKDYSNYHKVNINNKLLHDGKLIFQQGLKGFESEKVTIDGIEKTVMITSKYSSGDGSARYILGEIADIYRGGVVKFNDETWLITSHPLSNKIYKKAEIKICGTSFFLTSEDKLIDTGKINEITGKPIYEKVPGEKTEVPCIFERTTSINGTELAVNLPDGQANITIPYLVHEKLKIGLTLTFFGEDYQVDDIDYSKVYGDHGTIKLVAKKKVGEKT</sequence>
<organism>
    <name type="scientific">Bacillus subtilis (strain 168)</name>
    <dbReference type="NCBI Taxonomy" id="224308"/>
    <lineage>
        <taxon>Bacteria</taxon>
        <taxon>Bacillati</taxon>
        <taxon>Bacillota</taxon>
        <taxon>Bacilli</taxon>
        <taxon>Bacillales</taxon>
        <taxon>Bacillaceae</taxon>
        <taxon>Bacillus</taxon>
    </lineage>
</organism>
<keyword id="KW-1185">Reference proteome</keyword>
<gene>
    <name type="primary">yomX</name>
    <name type="ordered locus">BSU21190</name>
</gene>
<protein>
    <recommendedName>
        <fullName>SPbeta prophage-derived uncharacterized protein YomX</fullName>
    </recommendedName>
</protein>
<accession>O31960</accession>
<proteinExistence type="predicted"/>
<feature type="chain" id="PRO_0000360601" description="SPbeta prophage-derived uncharacterized protein YomX">
    <location>
        <begin position="1"/>
        <end position="216"/>
    </location>
</feature>
<dbReference type="EMBL" id="AL009126">
    <property type="protein sequence ID" value="CAB14037.1"/>
    <property type="molecule type" value="Genomic_DNA"/>
</dbReference>
<dbReference type="RefSeq" id="NP_390002.1">
    <property type="nucleotide sequence ID" value="NC_000964.3"/>
</dbReference>
<dbReference type="RefSeq" id="WP_003230958.1">
    <property type="nucleotide sequence ID" value="NZ_OZ025638.1"/>
</dbReference>
<dbReference type="FunCoup" id="O31960">
    <property type="interactions" value="89"/>
</dbReference>
<dbReference type="STRING" id="224308.BSU21190"/>
<dbReference type="PaxDb" id="224308-BSU21190"/>
<dbReference type="EnsemblBacteria" id="CAB14037">
    <property type="protein sequence ID" value="CAB14037"/>
    <property type="gene ID" value="BSU_21190"/>
</dbReference>
<dbReference type="GeneID" id="939153"/>
<dbReference type="KEGG" id="bsu:BSU21190"/>
<dbReference type="PATRIC" id="fig|224308.179.peg.2313"/>
<dbReference type="eggNOG" id="ENOG502ZJW1">
    <property type="taxonomic scope" value="Bacteria"/>
</dbReference>
<dbReference type="InParanoid" id="O31960"/>
<dbReference type="OrthoDB" id="2892415at2"/>
<dbReference type="BioCyc" id="BSUB:BSU21190-MONOMER"/>
<dbReference type="Proteomes" id="UP000001570">
    <property type="component" value="Chromosome"/>
</dbReference>